<reference key="1">
    <citation type="submission" date="2007-10" db="EMBL/GenBank/DDBJ databases">
        <title>Complete sequence of Salinispora arenicola CNS-205.</title>
        <authorList>
            <consortium name="US DOE Joint Genome Institute"/>
            <person name="Copeland A."/>
            <person name="Lucas S."/>
            <person name="Lapidus A."/>
            <person name="Barry K."/>
            <person name="Glavina del Rio T."/>
            <person name="Dalin E."/>
            <person name="Tice H."/>
            <person name="Pitluck S."/>
            <person name="Foster B."/>
            <person name="Schmutz J."/>
            <person name="Larimer F."/>
            <person name="Land M."/>
            <person name="Hauser L."/>
            <person name="Kyrpides N."/>
            <person name="Ivanova N."/>
            <person name="Jensen P.R."/>
            <person name="Moore B.S."/>
            <person name="Penn K."/>
            <person name="Jenkins C."/>
            <person name="Udwary D."/>
            <person name="Xiang L."/>
            <person name="Gontang E."/>
            <person name="Richardson P."/>
        </authorList>
    </citation>
    <scope>NUCLEOTIDE SEQUENCE [LARGE SCALE GENOMIC DNA]</scope>
    <source>
        <strain>CNS-205</strain>
    </source>
</reference>
<protein>
    <recommendedName>
        <fullName evidence="1">Holliday junction branch migration complex subunit RuvB</fullName>
        <ecNumber evidence="1">3.6.4.-</ecNumber>
    </recommendedName>
</protein>
<feature type="chain" id="PRO_1000074096" description="Holliday junction branch migration complex subunit RuvB">
    <location>
        <begin position="1"/>
        <end position="354"/>
    </location>
</feature>
<feature type="region of interest" description="Large ATPase domain (RuvB-L)" evidence="1">
    <location>
        <begin position="1"/>
        <end position="183"/>
    </location>
</feature>
<feature type="region of interest" description="Small ATPAse domain (RuvB-S)" evidence="1">
    <location>
        <begin position="184"/>
        <end position="254"/>
    </location>
</feature>
<feature type="region of interest" description="Head domain (RuvB-H)" evidence="1">
    <location>
        <begin position="257"/>
        <end position="354"/>
    </location>
</feature>
<feature type="region of interest" description="Disordered" evidence="2">
    <location>
        <begin position="330"/>
        <end position="354"/>
    </location>
</feature>
<feature type="binding site" evidence="1">
    <location>
        <position position="23"/>
    </location>
    <ligand>
        <name>ATP</name>
        <dbReference type="ChEBI" id="CHEBI:30616"/>
    </ligand>
</feature>
<feature type="binding site" evidence="1">
    <location>
        <position position="64"/>
    </location>
    <ligand>
        <name>ATP</name>
        <dbReference type="ChEBI" id="CHEBI:30616"/>
    </ligand>
</feature>
<feature type="binding site" evidence="1">
    <location>
        <position position="67"/>
    </location>
    <ligand>
        <name>ATP</name>
        <dbReference type="ChEBI" id="CHEBI:30616"/>
    </ligand>
</feature>
<feature type="binding site" evidence="1">
    <location>
        <position position="68"/>
    </location>
    <ligand>
        <name>ATP</name>
        <dbReference type="ChEBI" id="CHEBI:30616"/>
    </ligand>
</feature>
<feature type="binding site" evidence="1">
    <location>
        <position position="68"/>
    </location>
    <ligand>
        <name>Mg(2+)</name>
        <dbReference type="ChEBI" id="CHEBI:18420"/>
    </ligand>
</feature>
<feature type="binding site" evidence="1">
    <location>
        <position position="69"/>
    </location>
    <ligand>
        <name>ATP</name>
        <dbReference type="ChEBI" id="CHEBI:30616"/>
    </ligand>
</feature>
<feature type="binding site" evidence="1">
    <location>
        <begin position="130"/>
        <end position="132"/>
    </location>
    <ligand>
        <name>ATP</name>
        <dbReference type="ChEBI" id="CHEBI:30616"/>
    </ligand>
</feature>
<feature type="binding site" evidence="1">
    <location>
        <position position="173"/>
    </location>
    <ligand>
        <name>ATP</name>
        <dbReference type="ChEBI" id="CHEBI:30616"/>
    </ligand>
</feature>
<feature type="binding site" evidence="1">
    <location>
        <position position="183"/>
    </location>
    <ligand>
        <name>ATP</name>
        <dbReference type="ChEBI" id="CHEBI:30616"/>
    </ligand>
</feature>
<feature type="binding site" evidence="1">
    <location>
        <position position="220"/>
    </location>
    <ligand>
        <name>ATP</name>
        <dbReference type="ChEBI" id="CHEBI:30616"/>
    </ligand>
</feature>
<feature type="binding site" evidence="1">
    <location>
        <position position="312"/>
    </location>
    <ligand>
        <name>DNA</name>
        <dbReference type="ChEBI" id="CHEBI:16991"/>
    </ligand>
</feature>
<feature type="binding site" evidence="1">
    <location>
        <position position="317"/>
    </location>
    <ligand>
        <name>DNA</name>
        <dbReference type="ChEBI" id="CHEBI:16991"/>
    </ligand>
</feature>
<name>RUVB_SALAI</name>
<sequence>MTGDNLVSAYVSDAERDVEASVRPRRLAEFIAQERVRDQLDLLLQGALRRGSPPDHILLSGPPGLGKTSLANIVAAELGTSIRVTSGPAIERSGDLAAILTSLGEGDVLFIDEIHRIARPAEELLYSAMEDFRVDVVVGKGPGATAIPLDVEPFTLVGATTRAGLLTGPMRDRFGFVAHLDFYSPADLETLLHRSARILGVPITGDGAVEISGRSRGTPRIANRLLRRVRDFAEVRADGVVTREAARAALLVYDVDALGLDRLDRQVLTALVDLFRGGPVGLSTLAVAVGEQPDTVEEVCEPFLVRAGLLARTPRGRVATEAAWRHLGRTPPNGIFGSDAPPASDLFSVEPDQP</sequence>
<gene>
    <name evidence="1" type="primary">ruvB</name>
    <name type="ordered locus">Sare_1800</name>
</gene>
<organism>
    <name type="scientific">Salinispora arenicola (strain CNS-205)</name>
    <dbReference type="NCBI Taxonomy" id="391037"/>
    <lineage>
        <taxon>Bacteria</taxon>
        <taxon>Bacillati</taxon>
        <taxon>Actinomycetota</taxon>
        <taxon>Actinomycetes</taxon>
        <taxon>Micromonosporales</taxon>
        <taxon>Micromonosporaceae</taxon>
        <taxon>Salinispora</taxon>
    </lineage>
</organism>
<proteinExistence type="inferred from homology"/>
<accession>A8LXW9</accession>
<comment type="function">
    <text evidence="1">The RuvA-RuvB-RuvC complex processes Holliday junction (HJ) DNA during genetic recombination and DNA repair, while the RuvA-RuvB complex plays an important role in the rescue of blocked DNA replication forks via replication fork reversal (RFR). RuvA specifically binds to HJ cruciform DNA, conferring on it an open structure. The RuvB hexamer acts as an ATP-dependent pump, pulling dsDNA into and through the RuvAB complex. RuvB forms 2 homohexamers on either side of HJ DNA bound by 1 or 2 RuvA tetramers; 4 subunits per hexamer contact DNA at a time. Coordinated motions by a converter formed by DNA-disengaged RuvB subunits stimulates ATP hydrolysis and nucleotide exchange. Immobilization of the converter enables RuvB to convert the ATP-contained energy into a lever motion, pulling 2 nucleotides of DNA out of the RuvA tetramer per ATP hydrolyzed, thus driving DNA branch migration. The RuvB motors rotate together with the DNA substrate, which together with the progressing nucleotide cycle form the mechanistic basis for DNA recombination by continuous HJ branch migration. Branch migration allows RuvC to scan DNA until it finds its consensus sequence, where it cleaves and resolves cruciform DNA.</text>
</comment>
<comment type="catalytic activity">
    <reaction evidence="1">
        <text>ATP + H2O = ADP + phosphate + H(+)</text>
        <dbReference type="Rhea" id="RHEA:13065"/>
        <dbReference type="ChEBI" id="CHEBI:15377"/>
        <dbReference type="ChEBI" id="CHEBI:15378"/>
        <dbReference type="ChEBI" id="CHEBI:30616"/>
        <dbReference type="ChEBI" id="CHEBI:43474"/>
        <dbReference type="ChEBI" id="CHEBI:456216"/>
    </reaction>
</comment>
<comment type="subunit">
    <text evidence="1">Homohexamer. Forms an RuvA(8)-RuvB(12)-Holliday junction (HJ) complex. HJ DNA is sandwiched between 2 RuvA tetramers; dsDNA enters through RuvA and exits via RuvB. An RuvB hexamer assembles on each DNA strand where it exits the tetramer. Each RuvB hexamer is contacted by two RuvA subunits (via domain III) on 2 adjacent RuvB subunits; this complex drives branch migration. In the full resolvosome a probable DNA-RuvA(4)-RuvB(12)-RuvC(2) complex forms which resolves the HJ.</text>
</comment>
<comment type="subcellular location">
    <subcellularLocation>
        <location evidence="1">Cytoplasm</location>
    </subcellularLocation>
</comment>
<comment type="domain">
    <text evidence="1">Has 3 domains, the large (RuvB-L) and small ATPase (RuvB-S) domains and the C-terminal head (RuvB-H) domain. The head domain binds DNA, while the ATPase domains jointly bind ATP, ADP or are empty depending on the state of the subunit in the translocation cycle. During a single DNA translocation step the structure of each domain remains the same, but their relative positions change.</text>
</comment>
<comment type="similarity">
    <text evidence="1">Belongs to the RuvB family.</text>
</comment>
<dbReference type="EC" id="3.6.4.-" evidence="1"/>
<dbReference type="EMBL" id="CP000850">
    <property type="protein sequence ID" value="ABV97686.1"/>
    <property type="molecule type" value="Genomic_DNA"/>
</dbReference>
<dbReference type="SMR" id="A8LXW9"/>
<dbReference type="STRING" id="391037.Sare_1800"/>
<dbReference type="KEGG" id="saq:Sare_1800"/>
<dbReference type="PATRIC" id="fig|391037.6.peg.1831"/>
<dbReference type="eggNOG" id="COG2255">
    <property type="taxonomic scope" value="Bacteria"/>
</dbReference>
<dbReference type="HOGENOM" id="CLU_055599_1_0_11"/>
<dbReference type="OrthoDB" id="9804478at2"/>
<dbReference type="GO" id="GO:0005737">
    <property type="term" value="C:cytoplasm"/>
    <property type="evidence" value="ECO:0007669"/>
    <property type="project" value="UniProtKB-SubCell"/>
</dbReference>
<dbReference type="GO" id="GO:0048476">
    <property type="term" value="C:Holliday junction resolvase complex"/>
    <property type="evidence" value="ECO:0007669"/>
    <property type="project" value="UniProtKB-UniRule"/>
</dbReference>
<dbReference type="GO" id="GO:0005524">
    <property type="term" value="F:ATP binding"/>
    <property type="evidence" value="ECO:0007669"/>
    <property type="project" value="UniProtKB-UniRule"/>
</dbReference>
<dbReference type="GO" id="GO:0016887">
    <property type="term" value="F:ATP hydrolysis activity"/>
    <property type="evidence" value="ECO:0007669"/>
    <property type="project" value="InterPro"/>
</dbReference>
<dbReference type="GO" id="GO:0000400">
    <property type="term" value="F:four-way junction DNA binding"/>
    <property type="evidence" value="ECO:0007669"/>
    <property type="project" value="UniProtKB-UniRule"/>
</dbReference>
<dbReference type="GO" id="GO:0009378">
    <property type="term" value="F:four-way junction helicase activity"/>
    <property type="evidence" value="ECO:0007669"/>
    <property type="project" value="InterPro"/>
</dbReference>
<dbReference type="GO" id="GO:0006310">
    <property type="term" value="P:DNA recombination"/>
    <property type="evidence" value="ECO:0007669"/>
    <property type="project" value="UniProtKB-UniRule"/>
</dbReference>
<dbReference type="GO" id="GO:0006281">
    <property type="term" value="P:DNA repair"/>
    <property type="evidence" value="ECO:0007669"/>
    <property type="project" value="UniProtKB-UniRule"/>
</dbReference>
<dbReference type="CDD" id="cd00009">
    <property type="entry name" value="AAA"/>
    <property type="match status" value="1"/>
</dbReference>
<dbReference type="Gene3D" id="1.10.8.60">
    <property type="match status" value="1"/>
</dbReference>
<dbReference type="Gene3D" id="3.40.50.300">
    <property type="entry name" value="P-loop containing nucleotide triphosphate hydrolases"/>
    <property type="match status" value="1"/>
</dbReference>
<dbReference type="Gene3D" id="1.10.10.10">
    <property type="entry name" value="Winged helix-like DNA-binding domain superfamily/Winged helix DNA-binding domain"/>
    <property type="match status" value="1"/>
</dbReference>
<dbReference type="HAMAP" id="MF_00016">
    <property type="entry name" value="DNA_HJ_migration_RuvB"/>
    <property type="match status" value="1"/>
</dbReference>
<dbReference type="InterPro" id="IPR003593">
    <property type="entry name" value="AAA+_ATPase"/>
</dbReference>
<dbReference type="InterPro" id="IPR041445">
    <property type="entry name" value="AAA_lid_4"/>
</dbReference>
<dbReference type="InterPro" id="IPR004605">
    <property type="entry name" value="DNA_helicase_Holl-junc_RuvB"/>
</dbReference>
<dbReference type="InterPro" id="IPR027417">
    <property type="entry name" value="P-loop_NTPase"/>
</dbReference>
<dbReference type="InterPro" id="IPR008824">
    <property type="entry name" value="RuvB-like_N"/>
</dbReference>
<dbReference type="InterPro" id="IPR008823">
    <property type="entry name" value="RuvB_C"/>
</dbReference>
<dbReference type="InterPro" id="IPR036388">
    <property type="entry name" value="WH-like_DNA-bd_sf"/>
</dbReference>
<dbReference type="InterPro" id="IPR036390">
    <property type="entry name" value="WH_DNA-bd_sf"/>
</dbReference>
<dbReference type="NCBIfam" id="NF000868">
    <property type="entry name" value="PRK00080.1"/>
    <property type="match status" value="1"/>
</dbReference>
<dbReference type="NCBIfam" id="TIGR00635">
    <property type="entry name" value="ruvB"/>
    <property type="match status" value="1"/>
</dbReference>
<dbReference type="PANTHER" id="PTHR42848">
    <property type="match status" value="1"/>
</dbReference>
<dbReference type="PANTHER" id="PTHR42848:SF1">
    <property type="entry name" value="HOLLIDAY JUNCTION BRANCH MIGRATION COMPLEX SUBUNIT RUVB"/>
    <property type="match status" value="1"/>
</dbReference>
<dbReference type="Pfam" id="PF17864">
    <property type="entry name" value="AAA_lid_4"/>
    <property type="match status" value="1"/>
</dbReference>
<dbReference type="Pfam" id="PF05491">
    <property type="entry name" value="RuvB_C"/>
    <property type="match status" value="1"/>
</dbReference>
<dbReference type="Pfam" id="PF05496">
    <property type="entry name" value="RuvB_N"/>
    <property type="match status" value="1"/>
</dbReference>
<dbReference type="SMART" id="SM00382">
    <property type="entry name" value="AAA"/>
    <property type="match status" value="1"/>
</dbReference>
<dbReference type="SUPFAM" id="SSF52540">
    <property type="entry name" value="P-loop containing nucleoside triphosphate hydrolases"/>
    <property type="match status" value="1"/>
</dbReference>
<dbReference type="SUPFAM" id="SSF46785">
    <property type="entry name" value="Winged helix' DNA-binding domain"/>
    <property type="match status" value="1"/>
</dbReference>
<keyword id="KW-0067">ATP-binding</keyword>
<keyword id="KW-0963">Cytoplasm</keyword>
<keyword id="KW-0227">DNA damage</keyword>
<keyword id="KW-0233">DNA recombination</keyword>
<keyword id="KW-0234">DNA repair</keyword>
<keyword id="KW-0238">DNA-binding</keyword>
<keyword id="KW-0378">Hydrolase</keyword>
<keyword id="KW-0547">Nucleotide-binding</keyword>
<evidence type="ECO:0000255" key="1">
    <source>
        <dbReference type="HAMAP-Rule" id="MF_00016"/>
    </source>
</evidence>
<evidence type="ECO:0000256" key="2">
    <source>
        <dbReference type="SAM" id="MobiDB-lite"/>
    </source>
</evidence>